<evidence type="ECO:0000250" key="1"/>
<evidence type="ECO:0000255" key="2"/>
<evidence type="ECO:0000305" key="3"/>
<reference key="1">
    <citation type="journal article" date="2003" name="Virus Res.">
        <title>Bat lyssaviruses (Aravan and Khujand) from Central Asia: phylogenetic relationships according to N, P and G gene sequences.</title>
        <authorList>
            <person name="Kuzmin I.V."/>
            <person name="Orciari L.A."/>
            <person name="Arai Y.T."/>
            <person name="Smith J.S."/>
            <person name="Hanlon C.A."/>
            <person name="Kameoka Y."/>
            <person name="Rupprecht C.E."/>
        </authorList>
    </citation>
    <scope>NUCLEOTIDE SEQUENCE [GENOMIC RNA]</scope>
</reference>
<reference key="2">
    <citation type="journal article" date="2008" name="Virus Res.">
        <title>Complete genomes of Aravan, Khujand, Irkut and West Caucasian bat viruses, with special attention to the polymerase gene and non-coding regions.</title>
        <authorList>
            <person name="Kuzmin I.V."/>
            <person name="Wu X."/>
            <person name="Tordo N."/>
            <person name="Rupprecht C.E."/>
        </authorList>
    </citation>
    <scope>NUCLEOTIDE SEQUENCE [GENOMIC RNA]</scope>
</reference>
<organismHost>
    <name type="scientific">Myotis blythii</name>
    <name type="common">Lesser mouse-eared bat</name>
    <dbReference type="NCBI Taxonomy" id="109482"/>
</organismHost>
<name>GLYCO_ARAV</name>
<organism>
    <name type="scientific">Aravan virus</name>
    <name type="common">ARAV</name>
    <dbReference type="NCBI Taxonomy" id="211977"/>
    <lineage>
        <taxon>Viruses</taxon>
        <taxon>Riboviria</taxon>
        <taxon>Orthornavirae</taxon>
        <taxon>Negarnaviricota</taxon>
        <taxon>Haploviricotina</taxon>
        <taxon>Monjiviricetes</taxon>
        <taxon>Mononegavirales</taxon>
        <taxon>Rhabdoviridae</taxon>
        <taxon>Alpharhabdovirinae</taxon>
        <taxon>Lyssavirus</taxon>
    </lineage>
</organism>
<proteinExistence type="evidence at protein level"/>
<feature type="signal peptide" evidence="2">
    <location>
        <begin position="1"/>
        <end position="19"/>
    </location>
</feature>
<feature type="chain" id="PRO_0000295794" description="Glycoprotein">
    <location>
        <begin position="20"/>
        <end position="526"/>
    </location>
</feature>
<feature type="topological domain" description="Virion surface" evidence="2">
    <location>
        <begin position="20"/>
        <end position="459"/>
    </location>
</feature>
<feature type="transmembrane region" description="Helical" evidence="2">
    <location>
        <begin position="460"/>
        <end position="480"/>
    </location>
</feature>
<feature type="topological domain" description="Intravirion" evidence="2">
    <location>
        <begin position="481"/>
        <end position="526"/>
    </location>
</feature>
<feature type="lipid moiety-binding region" description="S-palmitoyl cysteine; by host" evidence="1">
    <location>
        <position position="480"/>
    </location>
</feature>
<feature type="glycosylation site" description="N-linked (GlcNAc...) asparagine; by host" evidence="1">
    <location>
        <position position="338"/>
    </location>
</feature>
<gene>
    <name type="primary">G</name>
</gene>
<protein>
    <recommendedName>
        <fullName>Glycoprotein</fullName>
    </recommendedName>
</protein>
<sequence length="526" mass="59000">MPLQAIPLFSLILPVLVAGKFPIYTIPDKIGPWSPIDINHLSCPNNLVVEDEGCTTLTAFSYMELKVGYITTIKVSGFTCTGVVTEAETYTNFVGYVTTTFRRKHFRPTASACREAYNWKATGDPRYEESLHNPYPDSHWLRTVKTTKESLLIISPSVADMDAYDKALYSKIFPNGKCLGVSLSSPFCSTNHDYTLWMPENPKPGVSCDIFTTSKGKKATKDGKLCGFVDERGLYKSLKGACKLKLCGVMGLRLMDGSWVSLQKTEESEWCSPNQLINIHDFHSDEIEHMVVEELVKKREECLDALESIMTTKSISFRRLSHLRKLVPGFGKAYTLINKTLMEADAHYKSVREWTEVIPSKGCLKAGGGCYPHYNRVFFNGIILSPDGHVLIPEMQSALLQQHIELLESSVIPLRHPLADPSTVFKGDDEAEEFVEVHLPDTQKQISGIDLGLPEWKRYFLMGMSAIGFLALTIILAVCCRRIKRRKQSKPNPVELIRKVSVTSQSGRAIPSWESYKVKTGDQPQV</sequence>
<keyword id="KW-0325">Glycoprotein</keyword>
<keyword id="KW-0449">Lipoprotein</keyword>
<keyword id="KW-0472">Membrane</keyword>
<keyword id="KW-0564">Palmitate</keyword>
<keyword id="KW-0732">Signal</keyword>
<keyword id="KW-0812">Transmembrane</keyword>
<keyword id="KW-1133">Transmembrane helix</keyword>
<keyword id="KW-0261">Viral envelope protein</keyword>
<keyword id="KW-0946">Virion</keyword>
<comment type="function">
    <text evidence="1">Attaches the virus to host cellular receptor, inducing endocytosis of the virion. In the endosome, the acidic pH induces conformational changes in the glycoprotein trimer, which trigger fusion between virus and cell membrane. There is convincing in vitro evidence that the muscular form of the nicotinic acetylcholine receptor (nAChR), the neuronal cell adhesion molecule (NCAM), and the p75 neurotrophin receptor (p75NTR) bind glycoprotein and thereby facilitate rabies virus entry into cells (By similarity).</text>
</comment>
<comment type="subunit">
    <text evidence="1">Homotrimer. Interacts with matrix protein (By similarity).</text>
</comment>
<comment type="subcellular location">
    <subcellularLocation>
        <location evidence="3">Virion membrane</location>
        <topology evidence="3">Single-pass type I membrane protein</topology>
    </subcellularLocation>
</comment>
<comment type="PTM">
    <text evidence="1">Glycosylated and palmitoylated by host. Glycosylation is crucial for glycoprotein export at the cell surface (By similarity).</text>
</comment>
<comment type="biotechnology">
    <text>Primary surface antigen capable of inducing and reacting with virus-neutralizing antibodies. Almost all human and veterinary vaccines are based on the functional aspects of the G protein.</text>
</comment>
<comment type="miscellaneous">
    <text evidence="1">Arg-352 is highly involved in rabies virus pathogenicity. Its mutation dramatically attenuates the virus (By similarity).</text>
</comment>
<comment type="similarity">
    <text evidence="3">Belongs to the lyssavirus glycoprotein family.</text>
</comment>
<accession>Q6X1D5</accession>
<dbReference type="EMBL" id="EF614259">
    <property type="protein sequence ID" value="AAP86775.1"/>
    <property type="molecule type" value="Genomic_RNA"/>
</dbReference>
<dbReference type="RefSeq" id="YP_007641395.1">
    <property type="nucleotide sequence ID" value="NC_020808.1"/>
</dbReference>
<dbReference type="SMR" id="Q6X1D5"/>
<dbReference type="GlyCosmos" id="Q6X1D5">
    <property type="glycosylation" value="1 site, No reported glycans"/>
</dbReference>
<dbReference type="GeneID" id="14857928"/>
<dbReference type="KEGG" id="vg:14857928"/>
<dbReference type="OrthoDB" id="21147at10239"/>
<dbReference type="Proteomes" id="UP000007445">
    <property type="component" value="Genome"/>
</dbReference>
<dbReference type="GO" id="GO:0016020">
    <property type="term" value="C:membrane"/>
    <property type="evidence" value="ECO:0007669"/>
    <property type="project" value="UniProtKB-KW"/>
</dbReference>
<dbReference type="GO" id="GO:0019031">
    <property type="term" value="C:viral envelope"/>
    <property type="evidence" value="ECO:0007669"/>
    <property type="project" value="UniProtKB-KW"/>
</dbReference>
<dbReference type="GO" id="GO:0055036">
    <property type="term" value="C:virion membrane"/>
    <property type="evidence" value="ECO:0007669"/>
    <property type="project" value="UniProtKB-SubCell"/>
</dbReference>
<dbReference type="Gene3D" id="2.30.29.130">
    <property type="match status" value="1"/>
</dbReference>
<dbReference type="InterPro" id="IPR055448">
    <property type="entry name" value="PH_Rhabdo_glycop"/>
</dbReference>
<dbReference type="InterPro" id="IPR055447">
    <property type="entry name" value="Rhabdo_glycop_CD"/>
</dbReference>
<dbReference type="InterPro" id="IPR001903">
    <property type="entry name" value="Rhabdo_glycop_FD"/>
</dbReference>
<dbReference type="Pfam" id="PF24834">
    <property type="entry name" value="PH_Rhabdo_glycop"/>
    <property type="match status" value="1"/>
</dbReference>
<dbReference type="Pfam" id="PF24833">
    <property type="entry name" value="Rhabdo_glycop_CD"/>
    <property type="match status" value="1"/>
</dbReference>
<dbReference type="Pfam" id="PF00974">
    <property type="entry name" value="Rhabdo_glycop_FD"/>
    <property type="match status" value="1"/>
</dbReference>
<dbReference type="SUPFAM" id="SSF161008">
    <property type="entry name" value="Viral glycoprotein ectodomain-like"/>
    <property type="match status" value="1"/>
</dbReference>